<evidence type="ECO:0000250" key="1"/>
<evidence type="ECO:0000255" key="2"/>
<evidence type="ECO:0000256" key="3">
    <source>
        <dbReference type="SAM" id="MobiDB-lite"/>
    </source>
</evidence>
<evidence type="ECO:0000305" key="4"/>
<accession>Q8CFS6</accession>
<name>KCNV2_MOUSE</name>
<sequence>MLKQSNERRWSLSYKPWSTPETEDVPNTGSNQHRRSICSLGARTGSQASIAPQWTEGNYNYYIEEDEDCGEEGEDWKDDLAEENQKAECLTSLLDGHNDTPAQMSTLKVNVGGHSYLLECCELANYPKTRLGRLATSTTRRGQLGLCDDYEAQTDEYFFDRDPAVFQLIYNFYTSGVLLVRDELCPRSFLEELGYWGVRLKYTPRCCRICFEERRDELSEQLKIQRELRAQAQAEEAEELFRDMRFYGPQRQRLWNLMEKPFSSVAAKAMGVATNLFVLISVVALALNTVEEMQHQAEQGTGGGDPRPILEHVEMLCVAFFTLEFLLRLASTPNLQRFARSALNLVDLVAILPFYLQLLLECFTSEDQRHNKDSPREHDLETVGRVGKVGQVLRIMRLMRIFRILKLARHSTGLRAFGFTLRQCYQQVGCLMLFITMGIFSFSAAVYSVEHDVPGTNFTSILHAWWWAAVSISTVGYGDMYPETHLGRLFAFLCIAFGIILNGMPISILYNKFSDYYSKLKAYEYTAIRRERGKVNFMQRATKKMAECLSESHAQSTTRQEN</sequence>
<keyword id="KW-1003">Cell membrane</keyword>
<keyword id="KW-0325">Glycoprotein</keyword>
<keyword id="KW-0407">Ion channel</keyword>
<keyword id="KW-0406">Ion transport</keyword>
<keyword id="KW-0472">Membrane</keyword>
<keyword id="KW-0630">Potassium</keyword>
<keyword id="KW-0631">Potassium channel</keyword>
<keyword id="KW-0633">Potassium transport</keyword>
<keyword id="KW-1185">Reference proteome</keyword>
<keyword id="KW-0812">Transmembrane</keyword>
<keyword id="KW-1133">Transmembrane helix</keyword>
<keyword id="KW-0813">Transport</keyword>
<keyword id="KW-0851">Voltage-gated channel</keyword>
<protein>
    <recommendedName>
        <fullName>Potassium voltage-gated channel subfamily V member 2</fullName>
    </recommendedName>
    <alternativeName>
        <fullName>Voltage-gated potassium channel subunit Kv8.2</fullName>
    </alternativeName>
</protein>
<proteinExistence type="evidence at transcript level"/>
<comment type="function">
    <text evidence="1">Potassium channel subunit. Modulates channel activity by shifting the threshold and the half-maximal activation to more negative values (By similarity).</text>
</comment>
<comment type="subunit">
    <text evidence="1">Heteromultimer with KCNB1, KCNC1 and KCNF1. Does not form homomultimers (By similarity).</text>
</comment>
<comment type="subcellular location">
    <subcellularLocation>
        <location evidence="1">Cell membrane</location>
        <topology evidence="1">Multi-pass membrane protein</topology>
    </subcellularLocation>
</comment>
<comment type="domain">
    <text evidence="1">The segment S4 is probably the voltage-sensor and is characterized by a series of positively charged amino acids at every third position.</text>
</comment>
<comment type="similarity">
    <text evidence="4">Belongs to the potassium channel family. V (TC 1.A.1.2) subfamily. Kv8.2/KCNV2 sub-subfamily.</text>
</comment>
<dbReference type="EMBL" id="AY238939">
    <property type="protein sequence ID" value="AAP70480.1"/>
    <property type="molecule type" value="mRNA"/>
</dbReference>
<dbReference type="EMBL" id="BC039042">
    <property type="protein sequence ID" value="AAH39042.1"/>
    <property type="molecule type" value="mRNA"/>
</dbReference>
<dbReference type="CCDS" id="CCDS29722.1"/>
<dbReference type="RefSeq" id="NP_899002.1">
    <property type="nucleotide sequence ID" value="NM_183179.1"/>
</dbReference>
<dbReference type="SMR" id="Q8CFS6"/>
<dbReference type="FunCoup" id="Q8CFS6">
    <property type="interactions" value="18"/>
</dbReference>
<dbReference type="STRING" id="10090.ENSMUSP00000055091"/>
<dbReference type="GlyCosmos" id="Q8CFS6">
    <property type="glycosylation" value="1 site, No reported glycans"/>
</dbReference>
<dbReference type="GlyGen" id="Q8CFS6">
    <property type="glycosylation" value="1 site"/>
</dbReference>
<dbReference type="iPTMnet" id="Q8CFS6"/>
<dbReference type="PhosphoSitePlus" id="Q8CFS6"/>
<dbReference type="PaxDb" id="10090-ENSMUSP00000055091"/>
<dbReference type="ProteomicsDB" id="263506"/>
<dbReference type="ABCD" id="Q8CFS6">
    <property type="antibodies" value="2 sequenced antibodies"/>
</dbReference>
<dbReference type="Antibodypedia" id="23918">
    <property type="antibodies" value="200 antibodies from 25 providers"/>
</dbReference>
<dbReference type="DNASU" id="240595"/>
<dbReference type="Ensembl" id="ENSMUST00000056708.4">
    <property type="protein sequence ID" value="ENSMUSP00000055091.4"/>
    <property type="gene ID" value="ENSMUSG00000047298.4"/>
</dbReference>
<dbReference type="GeneID" id="240595"/>
<dbReference type="KEGG" id="mmu:240595"/>
<dbReference type="UCSC" id="uc008hbw.1">
    <property type="organism name" value="mouse"/>
</dbReference>
<dbReference type="AGR" id="MGI:2670981"/>
<dbReference type="CTD" id="169522"/>
<dbReference type="MGI" id="MGI:2670981">
    <property type="gene designation" value="Kcnv2"/>
</dbReference>
<dbReference type="VEuPathDB" id="HostDB:ENSMUSG00000047298"/>
<dbReference type="eggNOG" id="KOG3713">
    <property type="taxonomic scope" value="Eukaryota"/>
</dbReference>
<dbReference type="GeneTree" id="ENSGT00940000157438"/>
<dbReference type="HOGENOM" id="CLU_011722_4_1_1"/>
<dbReference type="InParanoid" id="Q8CFS6"/>
<dbReference type="OMA" id="YQAVAIY"/>
<dbReference type="OrthoDB" id="296522at2759"/>
<dbReference type="PhylomeDB" id="Q8CFS6"/>
<dbReference type="TreeFam" id="TF313103"/>
<dbReference type="Reactome" id="R-MMU-1296072">
    <property type="pathway name" value="Voltage gated Potassium channels"/>
</dbReference>
<dbReference type="BioGRID-ORCS" id="240595">
    <property type="hits" value="2 hits in 77 CRISPR screens"/>
</dbReference>
<dbReference type="PRO" id="PR:Q8CFS6"/>
<dbReference type="Proteomes" id="UP000000589">
    <property type="component" value="Chromosome 19"/>
</dbReference>
<dbReference type="RNAct" id="Q8CFS6">
    <property type="molecule type" value="protein"/>
</dbReference>
<dbReference type="Bgee" id="ENSMUSG00000047298">
    <property type="expression patterns" value="Expressed in retinal neural layer and 20 other cell types or tissues"/>
</dbReference>
<dbReference type="GO" id="GO:0008076">
    <property type="term" value="C:voltage-gated potassium channel complex"/>
    <property type="evidence" value="ECO:0007669"/>
    <property type="project" value="InterPro"/>
</dbReference>
<dbReference type="GO" id="GO:0005249">
    <property type="term" value="F:voltage-gated potassium channel activity"/>
    <property type="evidence" value="ECO:0007669"/>
    <property type="project" value="InterPro"/>
</dbReference>
<dbReference type="GO" id="GO:0051260">
    <property type="term" value="P:protein homooligomerization"/>
    <property type="evidence" value="ECO:0007669"/>
    <property type="project" value="InterPro"/>
</dbReference>
<dbReference type="FunFam" id="1.10.287.70:FF:000005">
    <property type="entry name" value="potassium voltage-gated channel subfamily G member 1"/>
    <property type="match status" value="1"/>
</dbReference>
<dbReference type="FunFam" id="1.20.120.350:FF:000042">
    <property type="entry name" value="Potassium voltage-gated channel subfamily V member 2"/>
    <property type="match status" value="1"/>
</dbReference>
<dbReference type="FunFam" id="3.30.710.10:FF:000093">
    <property type="entry name" value="Potassium voltage-gated channel subfamily V member 2"/>
    <property type="match status" value="1"/>
</dbReference>
<dbReference type="Gene3D" id="1.10.287.70">
    <property type="match status" value="1"/>
</dbReference>
<dbReference type="Gene3D" id="3.30.710.10">
    <property type="entry name" value="Potassium Channel Kv1.1, Chain A"/>
    <property type="match status" value="1"/>
</dbReference>
<dbReference type="Gene3D" id="1.20.120.350">
    <property type="entry name" value="Voltage-gated potassium channels. Chain C"/>
    <property type="match status" value="1"/>
</dbReference>
<dbReference type="InterPro" id="IPR005821">
    <property type="entry name" value="Ion_trans_dom"/>
</dbReference>
<dbReference type="InterPro" id="IPR003968">
    <property type="entry name" value="K_chnl_volt-dep_Kv"/>
</dbReference>
<dbReference type="InterPro" id="IPR003971">
    <property type="entry name" value="K_chnl_volt-dep_Kv5/Kv9"/>
</dbReference>
<dbReference type="InterPro" id="IPR011333">
    <property type="entry name" value="SKP1/BTB/POZ_sf"/>
</dbReference>
<dbReference type="InterPro" id="IPR003131">
    <property type="entry name" value="T1-type_BTB"/>
</dbReference>
<dbReference type="InterPro" id="IPR028325">
    <property type="entry name" value="VG_K_chnl"/>
</dbReference>
<dbReference type="InterPro" id="IPR027359">
    <property type="entry name" value="Volt_channel_dom_sf"/>
</dbReference>
<dbReference type="PANTHER" id="PTHR11537:SF40">
    <property type="entry name" value="POTASSIUM VOLTAGE-GATED CHANNEL SUBFAMILY V MEMBER 2"/>
    <property type="match status" value="1"/>
</dbReference>
<dbReference type="PANTHER" id="PTHR11537">
    <property type="entry name" value="VOLTAGE-GATED POTASSIUM CHANNEL"/>
    <property type="match status" value="1"/>
</dbReference>
<dbReference type="Pfam" id="PF02214">
    <property type="entry name" value="BTB_2"/>
    <property type="match status" value="1"/>
</dbReference>
<dbReference type="Pfam" id="PF00520">
    <property type="entry name" value="Ion_trans"/>
    <property type="match status" value="1"/>
</dbReference>
<dbReference type="PRINTS" id="PR00169">
    <property type="entry name" value="KCHANNEL"/>
</dbReference>
<dbReference type="PRINTS" id="PR01494">
    <property type="entry name" value="KV9CHANNEL"/>
</dbReference>
<dbReference type="PRINTS" id="PR01491">
    <property type="entry name" value="KVCHANNEL"/>
</dbReference>
<dbReference type="SUPFAM" id="SSF54695">
    <property type="entry name" value="POZ domain"/>
    <property type="match status" value="1"/>
</dbReference>
<dbReference type="SUPFAM" id="SSF81324">
    <property type="entry name" value="Voltage-gated potassium channels"/>
    <property type="match status" value="1"/>
</dbReference>
<reference key="1">
    <citation type="journal article" date="2007" name="J. Neurophysiol.">
        <title>Characterization of the heteromeric potassium channel formed by Kv2.1 and the retinal subunit Kv8.2 in Xenopus oocytes.</title>
        <authorList>
            <person name="Czirjak G."/>
            <person name="Toth Z.E."/>
            <person name="Enyedi P."/>
        </authorList>
    </citation>
    <scope>NUCLEOTIDE SEQUENCE [MRNA]</scope>
    <source>
        <strain>NMRI</strain>
        <tissue>Retina</tissue>
    </source>
</reference>
<reference key="2">
    <citation type="journal article" date="2004" name="Genome Res.">
        <title>The status, quality, and expansion of the NIH full-length cDNA project: the Mammalian Gene Collection (MGC).</title>
        <authorList>
            <consortium name="The MGC Project Team"/>
        </authorList>
    </citation>
    <scope>NUCLEOTIDE SEQUENCE [LARGE SCALE MRNA]</scope>
    <source>
        <tissue>Eye</tissue>
    </source>
</reference>
<organism>
    <name type="scientific">Mus musculus</name>
    <name type="common">Mouse</name>
    <dbReference type="NCBI Taxonomy" id="10090"/>
    <lineage>
        <taxon>Eukaryota</taxon>
        <taxon>Metazoa</taxon>
        <taxon>Chordata</taxon>
        <taxon>Craniata</taxon>
        <taxon>Vertebrata</taxon>
        <taxon>Euteleostomi</taxon>
        <taxon>Mammalia</taxon>
        <taxon>Eutheria</taxon>
        <taxon>Euarchontoglires</taxon>
        <taxon>Glires</taxon>
        <taxon>Rodentia</taxon>
        <taxon>Myomorpha</taxon>
        <taxon>Muroidea</taxon>
        <taxon>Muridae</taxon>
        <taxon>Murinae</taxon>
        <taxon>Mus</taxon>
        <taxon>Mus</taxon>
    </lineage>
</organism>
<feature type="chain" id="PRO_0000320144" description="Potassium voltage-gated channel subfamily V member 2">
    <location>
        <begin position="1"/>
        <end position="562"/>
    </location>
</feature>
<feature type="topological domain" description="Cytoplasmic" evidence="2">
    <location>
        <begin position="1"/>
        <end position="163"/>
    </location>
</feature>
<feature type="transmembrane region" description="Helical; Name=Segment S1" evidence="2">
    <location>
        <begin position="164"/>
        <end position="184"/>
    </location>
</feature>
<feature type="topological domain" description="Extracellular" evidence="2">
    <location>
        <begin position="185"/>
        <end position="269"/>
    </location>
</feature>
<feature type="transmembrane region" description="Helical; Name=Segment S2" evidence="2">
    <location>
        <begin position="270"/>
        <end position="290"/>
    </location>
</feature>
<feature type="topological domain" description="Cytoplasmic" evidence="2">
    <location>
        <begin position="291"/>
        <end position="344"/>
    </location>
</feature>
<feature type="transmembrane region" description="Helical; Name=Segment S3" evidence="2">
    <location>
        <begin position="345"/>
        <end position="365"/>
    </location>
</feature>
<feature type="topological domain" description="Extracellular" evidence="2">
    <location>
        <begin position="366"/>
        <end position="391"/>
    </location>
</feature>
<feature type="transmembrane region" description="Helical; Voltage-sensor; Name=Segment S4" evidence="2">
    <location>
        <begin position="392"/>
        <end position="412"/>
    </location>
</feature>
<feature type="topological domain" description="Cytoplasmic" evidence="2">
    <location>
        <begin position="413"/>
        <end position="427"/>
    </location>
</feature>
<feature type="transmembrane region" description="Helical; Name=Segment S5" evidence="2">
    <location>
        <begin position="428"/>
        <end position="448"/>
    </location>
</feature>
<feature type="topological domain" description="Extracellular" evidence="2">
    <location>
        <begin position="449"/>
        <end position="461"/>
    </location>
</feature>
<feature type="intramembrane region" description="Pore-forming; Name=Segment H5" evidence="2">
    <location>
        <begin position="462"/>
        <end position="482"/>
    </location>
</feature>
<feature type="topological domain" description="Extracellular" evidence="2">
    <location>
        <begin position="483"/>
        <end position="488"/>
    </location>
</feature>
<feature type="transmembrane region" description="Helical; Name=Segment S6" evidence="2">
    <location>
        <begin position="489"/>
        <end position="509"/>
    </location>
</feature>
<feature type="topological domain" description="Cytoplasmic" evidence="2">
    <location>
        <begin position="510"/>
        <end position="562"/>
    </location>
</feature>
<feature type="region of interest" description="Disordered" evidence="3">
    <location>
        <begin position="1"/>
        <end position="34"/>
    </location>
</feature>
<feature type="short sequence motif" description="Selectivity filter" evidence="1">
    <location>
        <begin position="474"/>
        <end position="479"/>
    </location>
</feature>
<feature type="compositionally biased region" description="Basic and acidic residues" evidence="3">
    <location>
        <begin position="1"/>
        <end position="10"/>
    </location>
</feature>
<feature type="glycosylation site" description="N-linked (GlcNAc...) asparagine" evidence="2">
    <location>
        <position position="457"/>
    </location>
</feature>
<gene>
    <name type="primary">Kcnv2</name>
</gene>